<evidence type="ECO:0000250" key="1"/>
<evidence type="ECO:0000255" key="2"/>
<evidence type="ECO:0000255" key="3">
    <source>
        <dbReference type="PROSITE-ProRule" id="PRU00043"/>
    </source>
</evidence>
<dbReference type="RefSeq" id="NP_001013428.1">
    <property type="nucleotide sequence ID" value="NM_001013410.3"/>
</dbReference>
<dbReference type="SMR" id="Q5DRD0"/>
<dbReference type="FunCoup" id="Q5DRD0">
    <property type="interactions" value="22"/>
</dbReference>
<dbReference type="GlyCosmos" id="Q5DRD0">
    <property type="glycosylation" value="3 sites, No reported glycans"/>
</dbReference>
<dbReference type="PaxDb" id="9598-ENSPTRP00000029633"/>
<dbReference type="GeneID" id="471659"/>
<dbReference type="KEGG" id="ptr:471659"/>
<dbReference type="CTD" id="56131"/>
<dbReference type="eggNOG" id="KOG3594">
    <property type="taxonomic scope" value="Eukaryota"/>
</dbReference>
<dbReference type="HOGENOM" id="CLU_006480_3_0_1"/>
<dbReference type="InParanoid" id="Q5DRD0"/>
<dbReference type="TreeFam" id="TF332299"/>
<dbReference type="Proteomes" id="UP000002277">
    <property type="component" value="Unplaced"/>
</dbReference>
<dbReference type="GO" id="GO:0005886">
    <property type="term" value="C:plasma membrane"/>
    <property type="evidence" value="ECO:0000318"/>
    <property type="project" value="GO_Central"/>
</dbReference>
<dbReference type="GO" id="GO:0005509">
    <property type="term" value="F:calcium ion binding"/>
    <property type="evidence" value="ECO:0007669"/>
    <property type="project" value="InterPro"/>
</dbReference>
<dbReference type="GO" id="GO:0007155">
    <property type="term" value="P:cell adhesion"/>
    <property type="evidence" value="ECO:0000318"/>
    <property type="project" value="GO_Central"/>
</dbReference>
<dbReference type="GO" id="GO:0007156">
    <property type="term" value="P:homophilic cell adhesion via plasma membrane adhesion molecules"/>
    <property type="evidence" value="ECO:0007669"/>
    <property type="project" value="InterPro"/>
</dbReference>
<dbReference type="GO" id="GO:0007399">
    <property type="term" value="P:nervous system development"/>
    <property type="evidence" value="ECO:0007669"/>
    <property type="project" value="UniProtKB-ARBA"/>
</dbReference>
<dbReference type="CDD" id="cd11304">
    <property type="entry name" value="Cadherin_repeat"/>
    <property type="match status" value="5"/>
</dbReference>
<dbReference type="FunFam" id="2.60.40.60:FF:000001">
    <property type="entry name" value="Protocadherin alpha 2"/>
    <property type="match status" value="1"/>
</dbReference>
<dbReference type="FunFam" id="2.60.40.60:FF:000002">
    <property type="entry name" value="Protocadherin alpha 2"/>
    <property type="match status" value="1"/>
</dbReference>
<dbReference type="FunFam" id="2.60.40.60:FF:000006">
    <property type="entry name" value="Protocadherin alpha 2"/>
    <property type="match status" value="1"/>
</dbReference>
<dbReference type="FunFam" id="2.60.40.60:FF:000046">
    <property type="entry name" value="Protocadherin beta 5"/>
    <property type="match status" value="1"/>
</dbReference>
<dbReference type="FunFam" id="2.60.40.60:FF:000309">
    <property type="entry name" value="Protocadherin beta-8"/>
    <property type="match status" value="1"/>
</dbReference>
<dbReference type="FunFam" id="2.60.40.60:FF:000018">
    <property type="entry name" value="Protocadherin gamma c3"/>
    <property type="match status" value="1"/>
</dbReference>
<dbReference type="Gene3D" id="2.60.40.60">
    <property type="entry name" value="Cadherins"/>
    <property type="match status" value="6"/>
</dbReference>
<dbReference type="InterPro" id="IPR002126">
    <property type="entry name" value="Cadherin-like_dom"/>
</dbReference>
<dbReference type="InterPro" id="IPR015919">
    <property type="entry name" value="Cadherin-like_sf"/>
</dbReference>
<dbReference type="InterPro" id="IPR032455">
    <property type="entry name" value="Cadherin_C"/>
</dbReference>
<dbReference type="InterPro" id="IPR020894">
    <property type="entry name" value="Cadherin_CS"/>
</dbReference>
<dbReference type="InterPro" id="IPR013164">
    <property type="entry name" value="Cadherin_N"/>
</dbReference>
<dbReference type="InterPro" id="IPR050174">
    <property type="entry name" value="Protocadherin/Cadherin-CA"/>
</dbReference>
<dbReference type="PANTHER" id="PTHR24028">
    <property type="entry name" value="CADHERIN-87A"/>
    <property type="match status" value="1"/>
</dbReference>
<dbReference type="PANTHER" id="PTHR24028:SF55">
    <property type="entry name" value="PROTOCADHERIN BETA-4"/>
    <property type="match status" value="1"/>
</dbReference>
<dbReference type="Pfam" id="PF00028">
    <property type="entry name" value="Cadherin"/>
    <property type="match status" value="5"/>
</dbReference>
<dbReference type="Pfam" id="PF08266">
    <property type="entry name" value="Cadherin_2"/>
    <property type="match status" value="1"/>
</dbReference>
<dbReference type="Pfam" id="PF16492">
    <property type="entry name" value="Cadherin_C_2"/>
    <property type="match status" value="1"/>
</dbReference>
<dbReference type="PRINTS" id="PR00205">
    <property type="entry name" value="CADHERIN"/>
</dbReference>
<dbReference type="SMART" id="SM00112">
    <property type="entry name" value="CA"/>
    <property type="match status" value="5"/>
</dbReference>
<dbReference type="SUPFAM" id="SSF49313">
    <property type="entry name" value="Cadherin-like"/>
    <property type="match status" value="6"/>
</dbReference>
<dbReference type="PROSITE" id="PS00232">
    <property type="entry name" value="CADHERIN_1"/>
    <property type="match status" value="5"/>
</dbReference>
<dbReference type="PROSITE" id="PS50268">
    <property type="entry name" value="CADHERIN_2"/>
    <property type="match status" value="5"/>
</dbReference>
<gene>
    <name type="primary">PCDHB4</name>
</gene>
<sequence>MKKLGRIHPNRQVLAFILMVFLSQVRLEPIRYSVLEETESGSFVAHLTKDLGLGIGELASRSARVLSDDDEQRLQLDRQTGDLLLREKLDREELCGPIEPCVLHFQVFLEMPVQFFQGELLIQDINDHSPVFPEREVLLKILENSQPGTLFPLLIAEDLDVGSNGLQKYTISPNSHFHILTRNHSEGKKYPDLVQDKPLDREEQPEFSLTLVALDGGSPPRSGTVMVRILIMDINDNAPEFVHTPYGVQVLENSPLDSPIVRVLARDIDAGNFGSVSYGLFQASDEIKQTFSINEVTGEILLKKKLDFEKIKSYHVEIEATDGGGLSGKGTVVIEVVDVNDNPPELIISSLTSSIPENAPETVVSIFRIRDRDSGENGKMICSIPDNLPFILKPTLKNFYTLVTERPLDRETSAEYNITITVTDLGTPRLKTQQSITVQVSDVNDNAPAFAQTSYTLFVRENNSPALHIGSVSATDRDSGTNAQVTYSLLPPQDPHLPLSSLVSINADNGHLFALRSLDYEALQAFEFRVGASDRGSPALSSEALVRVLVLDANDNSPFVLYPLQNGSAPCTELVPRAAEPGYLVTKVVAVDGDSGQNAWLSYQLLKATEPGLFGVWAHNGEVRTARLLSERDAAKHRLVVLVKDNGEPPRSATATLHVLLVDGFSQPYLPLPEAAPAQSQADSLTVYLVVALASVSSLFLFSVLLFVAVRLCRRSRAASVGRCSVPEGPFPGHLVDVSGTGTLSQSYQYEVCLTGDSGTGEFKFLKPIFPNLLVQDTGREVKENPKFRNSLVFS</sequence>
<reference key="1">
    <citation type="journal article" date="2005" name="Nature">
        <title>Initial sequence of the chimpanzee genome and comparison with the human genome.</title>
        <authorList>
            <consortium name="Chimpanzee sequencing and analysis consortium"/>
        </authorList>
    </citation>
    <scope>NUCLEOTIDE SEQUENCE [LARGE SCALE GENOMIC DNA]</scope>
</reference>
<reference key="2">
    <citation type="journal article" date="2005" name="Genetics">
        <title>Comparative genomics and diversifying selection of the clustered vertebrate protocadherin genes.</title>
        <authorList>
            <person name="Wu Q."/>
        </authorList>
    </citation>
    <scope>IDENTIFICATION</scope>
</reference>
<keyword id="KW-0106">Calcium</keyword>
<keyword id="KW-0130">Cell adhesion</keyword>
<keyword id="KW-1003">Cell membrane</keyword>
<keyword id="KW-0325">Glycoprotein</keyword>
<keyword id="KW-0472">Membrane</keyword>
<keyword id="KW-1185">Reference proteome</keyword>
<keyword id="KW-0677">Repeat</keyword>
<keyword id="KW-0732">Signal</keyword>
<keyword id="KW-0812">Transmembrane</keyword>
<keyword id="KW-1133">Transmembrane helix</keyword>
<protein>
    <recommendedName>
        <fullName>Protocadherin beta-4</fullName>
        <shortName>PCDH-beta-4</shortName>
    </recommendedName>
</protein>
<accession>Q5DRD0</accession>
<proteinExistence type="inferred from homology"/>
<organism>
    <name type="scientific">Pan troglodytes</name>
    <name type="common">Chimpanzee</name>
    <dbReference type="NCBI Taxonomy" id="9598"/>
    <lineage>
        <taxon>Eukaryota</taxon>
        <taxon>Metazoa</taxon>
        <taxon>Chordata</taxon>
        <taxon>Craniata</taxon>
        <taxon>Vertebrata</taxon>
        <taxon>Euteleostomi</taxon>
        <taxon>Mammalia</taxon>
        <taxon>Eutheria</taxon>
        <taxon>Euarchontoglires</taxon>
        <taxon>Primates</taxon>
        <taxon>Haplorrhini</taxon>
        <taxon>Catarrhini</taxon>
        <taxon>Hominidae</taxon>
        <taxon>Pan</taxon>
    </lineage>
</organism>
<name>PCDB4_PANTR</name>
<feature type="signal peptide" evidence="2">
    <location>
        <begin position="1"/>
        <end position="27"/>
    </location>
</feature>
<feature type="chain" id="PRO_0000003921" description="Protocadherin beta-4">
    <location>
        <begin position="28"/>
        <end position="795"/>
    </location>
</feature>
<feature type="topological domain" description="Extracellular" evidence="2">
    <location>
        <begin position="28"/>
        <end position="689"/>
    </location>
</feature>
<feature type="transmembrane region" description="Helical" evidence="2">
    <location>
        <begin position="690"/>
        <end position="710"/>
    </location>
</feature>
<feature type="topological domain" description="Cytoplasmic" evidence="2">
    <location>
        <begin position="711"/>
        <end position="795"/>
    </location>
</feature>
<feature type="domain" description="Cadherin 1" evidence="3">
    <location>
        <begin position="34"/>
        <end position="132"/>
    </location>
</feature>
<feature type="domain" description="Cadherin 2" evidence="3">
    <location>
        <begin position="137"/>
        <end position="241"/>
    </location>
</feature>
<feature type="domain" description="Cadherin 3" evidence="3">
    <location>
        <begin position="246"/>
        <end position="346"/>
    </location>
</feature>
<feature type="domain" description="Cadherin 4" evidence="3">
    <location>
        <begin position="351"/>
        <end position="450"/>
    </location>
</feature>
<feature type="domain" description="Cadherin 5" evidence="3">
    <location>
        <begin position="455"/>
        <end position="560"/>
    </location>
</feature>
<feature type="domain" description="Cadherin 6" evidence="3">
    <location>
        <begin position="567"/>
        <end position="670"/>
    </location>
</feature>
<feature type="glycosylation site" description="N-linked (GlcNAc...) asparagine" evidence="2">
    <location>
        <position position="183"/>
    </location>
</feature>
<feature type="glycosylation site" description="N-linked (GlcNAc...) asparagine" evidence="2">
    <location>
        <position position="417"/>
    </location>
</feature>
<feature type="glycosylation site" description="N-linked (GlcNAc...) asparagine" evidence="2">
    <location>
        <position position="566"/>
    </location>
</feature>
<comment type="function">
    <text>Potential calcium-dependent cell-adhesion protein. May be involved in the establishment and maintenance of specific neuronal connections in the brain.</text>
</comment>
<comment type="subcellular location">
    <subcellularLocation>
        <location evidence="1">Cell membrane</location>
        <topology evidence="1">Single-pass type I membrane protein</topology>
    </subcellularLocation>
</comment>